<accession>Q02232</accession>
<accession>I3R596</accession>
<protein>
    <recommendedName>
        <fullName>Gas vesicle protein G</fullName>
        <shortName>GvpG</shortName>
    </recommendedName>
</protein>
<proteinExistence type="evidence at transcript level"/>
<gene>
    <name evidence="4" type="primary">gvpG</name>
    <name type="ordered locus">HFX_1700</name>
</gene>
<dbReference type="EMBL" id="X64701">
    <property type="protein sequence ID" value="CAA45949.1"/>
    <property type="molecule type" value="Genomic_DNA"/>
</dbReference>
<dbReference type="EMBL" id="CP001868">
    <property type="protein sequence ID" value="AFK19406.1"/>
    <property type="molecule type" value="Genomic_DNA"/>
</dbReference>
<dbReference type="PIR" id="S28120">
    <property type="entry name" value="S28120"/>
</dbReference>
<dbReference type="RefSeq" id="WP_004056702.1">
    <property type="nucleotide sequence ID" value="NC_017941.2"/>
</dbReference>
<dbReference type="SMR" id="Q02232"/>
<dbReference type="STRING" id="523841.HFX_1700"/>
<dbReference type="PaxDb" id="523841-HFX_1700"/>
<dbReference type="GeneID" id="40157055"/>
<dbReference type="KEGG" id="hme:HFX_1700"/>
<dbReference type="eggNOG" id="arCOG03938">
    <property type="taxonomic scope" value="Archaea"/>
</dbReference>
<dbReference type="HOGENOM" id="CLU_185764_0_0_2"/>
<dbReference type="OrthoDB" id="214403at2157"/>
<dbReference type="Proteomes" id="UP000006469">
    <property type="component" value="Chromosome"/>
</dbReference>
<dbReference type="GO" id="GO:0031411">
    <property type="term" value="C:gas vesicle"/>
    <property type="evidence" value="ECO:0007669"/>
    <property type="project" value="UniProtKB-SubCell"/>
</dbReference>
<dbReference type="InterPro" id="IPR054797">
    <property type="entry name" value="Gas_vesic_GvpG_halobact"/>
</dbReference>
<dbReference type="InterPro" id="IPR007804">
    <property type="entry name" value="GvpG"/>
</dbReference>
<dbReference type="NCBIfam" id="NF045779">
    <property type="entry name" value="gas_vesic_GvpG"/>
    <property type="match status" value="1"/>
</dbReference>
<dbReference type="Pfam" id="PF05120">
    <property type="entry name" value="GvpG"/>
    <property type="match status" value="1"/>
</dbReference>
<evidence type="ECO:0000250" key="1">
    <source>
        <dbReference type="UniProtKB" id="P24371"/>
    </source>
</evidence>
<evidence type="ECO:0000269" key="2">
    <source>
    </source>
</evidence>
<evidence type="ECO:0000269" key="3">
    <source>
    </source>
</evidence>
<evidence type="ECO:0000303" key="4">
    <source>
    </source>
</evidence>
<evidence type="ECO:0000305" key="5"/>
<sequence>MFLVDDLLVNPFLSLLDILHTMALDEMNDMEEIRDEIKENQLLYEIGERSETDYQQRKQQLEARLETAERIQAQMQGRIEVKR</sequence>
<name>GVPG_HALMT</name>
<feature type="chain" id="PRO_0000182683" description="Gas vesicle protein G">
    <location>
        <begin position="1"/>
        <end position="83"/>
    </location>
</feature>
<keyword id="KW-0304">Gas vesicle</keyword>
<reference key="1">
    <citation type="journal article" date="1992" name="J. Mol. Biol.">
        <title>Three different but related gene clusters encoding gas vesicles in halophilic archaea.</title>
        <authorList>
            <person name="Englert C."/>
            <person name="Krueger K."/>
            <person name="Offner S."/>
            <person name="Pfeifer F."/>
        </authorList>
    </citation>
    <scope>NUCLEOTIDE SEQUENCE [GENOMIC DNA]</scope>
    <scope>INDUCTION</scope>
    <scope>GAS VESICLE GENE CLUSTER</scope>
    <source>
        <strain>ATCC 33500 / DSM 1411 / JCM 8866 / NBRC 14739 / NCIMB 2177 / R-4</strain>
    </source>
</reference>
<reference key="2">
    <citation type="journal article" date="2012" name="J. Bacteriol.">
        <title>Complete genome sequence of the metabolically versatile halophilic archaeon Haloferax mediterranei, a poly(3-hydroxybutyrate-co-3-hydroxyvalerate) producer.</title>
        <authorList>
            <person name="Han J."/>
            <person name="Zhang F."/>
            <person name="Hou J."/>
            <person name="Liu X."/>
            <person name="Li M."/>
            <person name="Liu H."/>
            <person name="Cai L."/>
            <person name="Zhang B."/>
            <person name="Chen Y."/>
            <person name="Zhou J."/>
            <person name="Hu S."/>
            <person name="Xiang H."/>
        </authorList>
    </citation>
    <scope>NUCLEOTIDE SEQUENCE [LARGE SCALE GENOMIC DNA]</scope>
    <source>
        <strain>ATCC 33500 / DSM 1411 / JCM 8866 / NBRC 14739 / NCIMB 2177 / R-4</strain>
    </source>
</reference>
<reference key="3">
    <citation type="journal article" date="1996" name="Microbiology">
        <title>Influence of salt on the transcription of the gas-vesicle genes of Haloferax mediterranei and identification of the endogenous transcriptional activator gene.</title>
        <authorList>
            <person name="Roeder R."/>
            <person name="Pfeifer F."/>
        </authorList>
    </citation>
    <scope>INDUCTION BY SALT</scope>
    <source>
        <strain>ATCC 33500 / DSM 1411 / JCM 8866 / NBRC 14739 / NCIMB 2177 / R-4</strain>
    </source>
</reference>
<comment type="function">
    <text evidence="1">Proteins GvpF to GvpM might be involved in nucleating gas vesicle formation. A minor component of the gas vesicle (By similarity). Gas vesicles are hollow, gas filled proteinaceous nanostructures found in some microorganisms. They allow positioning of halobacteria at the optimal depth for growth in the poorly aerated, shallow brine pools of their habitat (By similarity).</text>
</comment>
<comment type="function">
    <text evidence="2 3">Expression of a 9.5 kb mc-vac DNA fragment containing 2 divergently transcribed regions (gvpD-gvpE-gvpF-gvpG-gvpH-gvpI-gvpJ-gvpK-gvpL-gvpM and gvpA-gvpC-gvpN-gvpO) allows H.volcanii to produce gas vesicles.</text>
</comment>
<comment type="subunit">
    <text evidence="1">GvpF to GvpM interact with each other in vitro, and may form multi-subunit complex(es).</text>
</comment>
<comment type="subcellular location">
    <subcellularLocation>
        <location evidence="1">Gas vesicle</location>
    </subcellularLocation>
</comment>
<comment type="induction">
    <text evidence="2 3">Transcribed from early-log phase, decreases as cells enter stationary phase, probably as a long gvpF-gvpM RNA (PubMed:1404376). Highly expressed in 25% salt, poorly expressed in 15% salt, no gas vesicles are formed at 15% salt (PubMed:8757736).</text>
</comment>
<comment type="miscellaneous">
    <text evidence="2">Encoded in a 14-gene locus called mc-vac.</text>
</comment>
<comment type="similarity">
    <text evidence="5">Belongs to the gas vesicle GvpG family.</text>
</comment>
<organism>
    <name type="scientific">Haloferax mediterranei (strain ATCC 33500 / DSM 1411 / JCM 8866 / NBRC 14739 / NCIMB 2177 / R-4)</name>
    <name type="common">Halobacterium mediterranei</name>
    <dbReference type="NCBI Taxonomy" id="523841"/>
    <lineage>
        <taxon>Archaea</taxon>
        <taxon>Methanobacteriati</taxon>
        <taxon>Methanobacteriota</taxon>
        <taxon>Stenosarchaea group</taxon>
        <taxon>Halobacteria</taxon>
        <taxon>Halobacteriales</taxon>
        <taxon>Haloferacaceae</taxon>
        <taxon>Haloferax</taxon>
    </lineage>
</organism>